<gene>
    <name evidence="1" type="primary">lpxH</name>
    <name type="ordered locus">Sputcn32_1485</name>
</gene>
<sequence>MRTLFIGDLHLSADRLDITQAFTHFLDTELDDADALYILGDLFEVWVGDDIAAPFALELANKLKQVSLKLPVYFIHGNRDFMLGKQFARAAGMQILPEVTCLNLYGVKTVILHGDSLCTLDKAYQRFRKLRSLALARWLYGCLSKKTRQGIADNIRSKSKSSNKHKSYTIMDVEPNAVNALLARTHAQYMIHGHTHRPAIHQLDNGCKRIVVGDWYQQGSVLSVSPQGIDLQSLPFSPQQD</sequence>
<accession>A4Y5H7</accession>
<proteinExistence type="inferred from homology"/>
<reference key="1">
    <citation type="submission" date="2007-04" db="EMBL/GenBank/DDBJ databases">
        <title>Complete sequence of Shewanella putrefaciens CN-32.</title>
        <authorList>
            <consortium name="US DOE Joint Genome Institute"/>
            <person name="Copeland A."/>
            <person name="Lucas S."/>
            <person name="Lapidus A."/>
            <person name="Barry K."/>
            <person name="Detter J.C."/>
            <person name="Glavina del Rio T."/>
            <person name="Hammon N."/>
            <person name="Israni S."/>
            <person name="Dalin E."/>
            <person name="Tice H."/>
            <person name="Pitluck S."/>
            <person name="Chain P."/>
            <person name="Malfatti S."/>
            <person name="Shin M."/>
            <person name="Vergez L."/>
            <person name="Schmutz J."/>
            <person name="Larimer F."/>
            <person name="Land M."/>
            <person name="Hauser L."/>
            <person name="Kyrpides N."/>
            <person name="Mikhailova N."/>
            <person name="Romine M.F."/>
            <person name="Fredrickson J."/>
            <person name="Tiedje J."/>
            <person name="Richardson P."/>
        </authorList>
    </citation>
    <scope>NUCLEOTIDE SEQUENCE [LARGE SCALE GENOMIC DNA]</scope>
    <source>
        <strain>CN-32 / ATCC BAA-453</strain>
    </source>
</reference>
<comment type="function">
    <text evidence="1">Hydrolyzes the pyrophosphate bond of UDP-2,3-diacylglucosamine to yield 2,3-diacylglucosamine 1-phosphate (lipid X) and UMP by catalyzing the attack of water at the alpha-P atom. Involved in the biosynthesis of lipid A, a phosphorylated glycolipid that anchors the lipopolysaccharide to the outer membrane of the cell.</text>
</comment>
<comment type="catalytic activity">
    <reaction evidence="1">
        <text>UDP-2-N,3-O-bis[(3R)-3-hydroxytetradecanoyl]-alpha-D-glucosamine + H2O = 2-N,3-O-bis[(3R)-3-hydroxytetradecanoyl]-alpha-D-glucosaminyl 1-phosphate + UMP + 2 H(+)</text>
        <dbReference type="Rhea" id="RHEA:25213"/>
        <dbReference type="ChEBI" id="CHEBI:15377"/>
        <dbReference type="ChEBI" id="CHEBI:15378"/>
        <dbReference type="ChEBI" id="CHEBI:57865"/>
        <dbReference type="ChEBI" id="CHEBI:57957"/>
        <dbReference type="ChEBI" id="CHEBI:78847"/>
        <dbReference type="EC" id="3.6.1.54"/>
    </reaction>
</comment>
<comment type="cofactor">
    <cofactor evidence="1">
        <name>Mn(2+)</name>
        <dbReference type="ChEBI" id="CHEBI:29035"/>
    </cofactor>
    <text evidence="1">Binds 2 Mn(2+) ions per subunit in a binuclear metal center.</text>
</comment>
<comment type="pathway">
    <text evidence="1">Glycolipid biosynthesis; lipid IV(A) biosynthesis; lipid IV(A) from (3R)-3-hydroxytetradecanoyl-[acyl-carrier-protein] and UDP-N-acetyl-alpha-D-glucosamine: step 4/6.</text>
</comment>
<comment type="subcellular location">
    <subcellularLocation>
        <location evidence="1">Cell inner membrane</location>
        <topology evidence="1">Peripheral membrane protein</topology>
        <orientation evidence="1">Cytoplasmic side</orientation>
    </subcellularLocation>
</comment>
<comment type="similarity">
    <text evidence="1">Belongs to the LpxH family.</text>
</comment>
<name>LPXH_SHEPC</name>
<keyword id="KW-0997">Cell inner membrane</keyword>
<keyword id="KW-1003">Cell membrane</keyword>
<keyword id="KW-0378">Hydrolase</keyword>
<keyword id="KW-0441">Lipid A biosynthesis</keyword>
<keyword id="KW-0444">Lipid biosynthesis</keyword>
<keyword id="KW-0443">Lipid metabolism</keyword>
<keyword id="KW-0464">Manganese</keyword>
<keyword id="KW-0472">Membrane</keyword>
<keyword id="KW-0479">Metal-binding</keyword>
<feature type="chain" id="PRO_1000025085" description="UDP-2,3-diacylglucosamine hydrolase">
    <location>
        <begin position="1"/>
        <end position="241"/>
    </location>
</feature>
<feature type="binding site" evidence="1">
    <location>
        <position position="8"/>
    </location>
    <ligand>
        <name>Mn(2+)</name>
        <dbReference type="ChEBI" id="CHEBI:29035"/>
        <label>1</label>
    </ligand>
</feature>
<feature type="binding site" evidence="1">
    <location>
        <position position="10"/>
    </location>
    <ligand>
        <name>Mn(2+)</name>
        <dbReference type="ChEBI" id="CHEBI:29035"/>
        <label>1</label>
    </ligand>
</feature>
<feature type="binding site" evidence="1">
    <location>
        <position position="41"/>
    </location>
    <ligand>
        <name>Mn(2+)</name>
        <dbReference type="ChEBI" id="CHEBI:29035"/>
        <label>1</label>
    </ligand>
</feature>
<feature type="binding site" evidence="1">
    <location>
        <position position="41"/>
    </location>
    <ligand>
        <name>Mn(2+)</name>
        <dbReference type="ChEBI" id="CHEBI:29035"/>
        <label>2</label>
    </ligand>
</feature>
<feature type="binding site" evidence="1">
    <location>
        <begin position="78"/>
        <end position="79"/>
    </location>
    <ligand>
        <name>substrate</name>
    </ligand>
</feature>
<feature type="binding site" evidence="1">
    <location>
        <position position="78"/>
    </location>
    <ligand>
        <name>Mn(2+)</name>
        <dbReference type="ChEBI" id="CHEBI:29035"/>
        <label>2</label>
    </ligand>
</feature>
<feature type="binding site" evidence="1">
    <location>
        <position position="113"/>
    </location>
    <ligand>
        <name>Mn(2+)</name>
        <dbReference type="ChEBI" id="CHEBI:29035"/>
        <label>2</label>
    </ligand>
</feature>
<feature type="binding site" evidence="1">
    <location>
        <position position="121"/>
    </location>
    <ligand>
        <name>substrate</name>
    </ligand>
</feature>
<feature type="binding site" evidence="1">
    <location>
        <position position="159"/>
    </location>
    <ligand>
        <name>substrate</name>
    </ligand>
</feature>
<feature type="binding site" evidence="1">
    <location>
        <position position="163"/>
    </location>
    <ligand>
        <name>substrate</name>
    </ligand>
</feature>
<feature type="binding site" evidence="1">
    <location>
        <position position="166"/>
    </location>
    <ligand>
        <name>substrate</name>
    </ligand>
</feature>
<feature type="binding site" evidence="1">
    <location>
        <position position="194"/>
    </location>
    <ligand>
        <name>Mn(2+)</name>
        <dbReference type="ChEBI" id="CHEBI:29035"/>
        <label>2</label>
    </ligand>
</feature>
<feature type="binding site" evidence="1">
    <location>
        <position position="194"/>
    </location>
    <ligand>
        <name>substrate</name>
    </ligand>
</feature>
<feature type="binding site" evidence="1">
    <location>
        <position position="196"/>
    </location>
    <ligand>
        <name>Mn(2+)</name>
        <dbReference type="ChEBI" id="CHEBI:29035"/>
        <label>1</label>
    </ligand>
</feature>
<evidence type="ECO:0000255" key="1">
    <source>
        <dbReference type="HAMAP-Rule" id="MF_00575"/>
    </source>
</evidence>
<organism>
    <name type="scientific">Shewanella putrefaciens (strain CN-32 / ATCC BAA-453)</name>
    <dbReference type="NCBI Taxonomy" id="319224"/>
    <lineage>
        <taxon>Bacteria</taxon>
        <taxon>Pseudomonadati</taxon>
        <taxon>Pseudomonadota</taxon>
        <taxon>Gammaproteobacteria</taxon>
        <taxon>Alteromonadales</taxon>
        <taxon>Shewanellaceae</taxon>
        <taxon>Shewanella</taxon>
    </lineage>
</organism>
<dbReference type="EC" id="3.6.1.54" evidence="1"/>
<dbReference type="EMBL" id="CP000681">
    <property type="protein sequence ID" value="ABP75210.1"/>
    <property type="molecule type" value="Genomic_DNA"/>
</dbReference>
<dbReference type="SMR" id="A4Y5H7"/>
<dbReference type="STRING" id="319224.Sputcn32_1485"/>
<dbReference type="KEGG" id="spc:Sputcn32_1485"/>
<dbReference type="eggNOG" id="COG2908">
    <property type="taxonomic scope" value="Bacteria"/>
</dbReference>
<dbReference type="HOGENOM" id="CLU_074586_0_0_6"/>
<dbReference type="UniPathway" id="UPA00359">
    <property type="reaction ID" value="UER00480"/>
</dbReference>
<dbReference type="GO" id="GO:0005737">
    <property type="term" value="C:cytoplasm"/>
    <property type="evidence" value="ECO:0007669"/>
    <property type="project" value="InterPro"/>
</dbReference>
<dbReference type="GO" id="GO:0019897">
    <property type="term" value="C:extrinsic component of plasma membrane"/>
    <property type="evidence" value="ECO:0007669"/>
    <property type="project" value="UniProtKB-UniRule"/>
</dbReference>
<dbReference type="GO" id="GO:0030145">
    <property type="term" value="F:manganese ion binding"/>
    <property type="evidence" value="ECO:0007669"/>
    <property type="project" value="UniProtKB-UniRule"/>
</dbReference>
<dbReference type="GO" id="GO:0008758">
    <property type="term" value="F:UDP-2,3-diacylglucosamine hydrolase activity"/>
    <property type="evidence" value="ECO:0007669"/>
    <property type="project" value="UniProtKB-UniRule"/>
</dbReference>
<dbReference type="GO" id="GO:0009245">
    <property type="term" value="P:lipid A biosynthetic process"/>
    <property type="evidence" value="ECO:0007669"/>
    <property type="project" value="UniProtKB-UniRule"/>
</dbReference>
<dbReference type="CDD" id="cd07398">
    <property type="entry name" value="MPP_YbbF-LpxH"/>
    <property type="match status" value="1"/>
</dbReference>
<dbReference type="Gene3D" id="3.60.21.10">
    <property type="match status" value="1"/>
</dbReference>
<dbReference type="HAMAP" id="MF_00575">
    <property type="entry name" value="LpxH"/>
    <property type="match status" value="1"/>
</dbReference>
<dbReference type="InterPro" id="IPR004843">
    <property type="entry name" value="Calcineurin-like_PHP_ApaH"/>
</dbReference>
<dbReference type="InterPro" id="IPR043461">
    <property type="entry name" value="LpxH-like"/>
</dbReference>
<dbReference type="InterPro" id="IPR029052">
    <property type="entry name" value="Metallo-depent_PP-like"/>
</dbReference>
<dbReference type="InterPro" id="IPR010138">
    <property type="entry name" value="UDP-diacylglucosamine_Hdrlase"/>
</dbReference>
<dbReference type="NCBIfam" id="TIGR01854">
    <property type="entry name" value="lipid_A_lpxH"/>
    <property type="match status" value="1"/>
</dbReference>
<dbReference type="NCBIfam" id="NF003743">
    <property type="entry name" value="PRK05340.1"/>
    <property type="match status" value="1"/>
</dbReference>
<dbReference type="PANTHER" id="PTHR34990:SF1">
    <property type="entry name" value="UDP-2,3-DIACYLGLUCOSAMINE HYDROLASE"/>
    <property type="match status" value="1"/>
</dbReference>
<dbReference type="PANTHER" id="PTHR34990">
    <property type="entry name" value="UDP-2,3-DIACYLGLUCOSAMINE HYDROLASE-RELATED"/>
    <property type="match status" value="1"/>
</dbReference>
<dbReference type="Pfam" id="PF00149">
    <property type="entry name" value="Metallophos"/>
    <property type="match status" value="1"/>
</dbReference>
<dbReference type="SUPFAM" id="SSF56300">
    <property type="entry name" value="Metallo-dependent phosphatases"/>
    <property type="match status" value="1"/>
</dbReference>
<protein>
    <recommendedName>
        <fullName evidence="1">UDP-2,3-diacylglucosamine hydrolase</fullName>
        <ecNumber evidence="1">3.6.1.54</ecNumber>
    </recommendedName>
    <alternativeName>
        <fullName evidence="1">UDP-2,3-diacylglucosamine diphosphatase</fullName>
    </alternativeName>
</protein>